<evidence type="ECO:0000255" key="1">
    <source>
        <dbReference type="HAMAP-Rule" id="MF_00602"/>
    </source>
</evidence>
<feature type="chain" id="PRO_1000130109" description="Protein-arginine kinase">
    <location>
        <begin position="1"/>
        <end position="354"/>
    </location>
</feature>
<feature type="domain" description="Phosphagen kinase C-terminal" evidence="1">
    <location>
        <begin position="24"/>
        <end position="254"/>
    </location>
</feature>
<feature type="short sequence motif" description="RDXXRA motif of the pArg binding pocket involved in allosteric regulation" evidence="1">
    <location>
        <begin position="337"/>
        <end position="342"/>
    </location>
</feature>
<feature type="binding site" evidence="1">
    <location>
        <begin position="27"/>
        <end position="31"/>
    </location>
    <ligand>
        <name>ATP</name>
        <dbReference type="ChEBI" id="CHEBI:30616"/>
    </ligand>
</feature>
<feature type="binding site" evidence="1">
    <location>
        <position position="92"/>
    </location>
    <ligand>
        <name>ATP</name>
        <dbReference type="ChEBI" id="CHEBI:30616"/>
    </ligand>
</feature>
<feature type="binding site" evidence="1">
    <location>
        <position position="125"/>
    </location>
    <ligand>
        <name>ATP</name>
        <dbReference type="ChEBI" id="CHEBI:30616"/>
    </ligand>
</feature>
<feature type="binding site" evidence="1">
    <location>
        <begin position="176"/>
        <end position="180"/>
    </location>
    <ligand>
        <name>ATP</name>
        <dbReference type="ChEBI" id="CHEBI:30616"/>
    </ligand>
</feature>
<feature type="binding site" evidence="1">
    <location>
        <begin position="207"/>
        <end position="212"/>
    </location>
    <ligand>
        <name>ATP</name>
        <dbReference type="ChEBI" id="CHEBI:30616"/>
    </ligand>
</feature>
<protein>
    <recommendedName>
        <fullName evidence="1">Protein-arginine kinase</fullName>
        <ecNumber evidence="1">2.7.14.1</ecNumber>
    </recommendedName>
</protein>
<reference key="1">
    <citation type="submission" date="2008-10" db="EMBL/GenBank/DDBJ databases">
        <title>Genome sequence of Bacillus cereus AH187.</title>
        <authorList>
            <person name="Dodson R.J."/>
            <person name="Durkin A.S."/>
            <person name="Rosovitz M.J."/>
            <person name="Rasko D.A."/>
            <person name="Kolsto A.B."/>
            <person name="Okstad O.A."/>
            <person name="Ravel J."/>
            <person name="Sutton G."/>
        </authorList>
    </citation>
    <scope>NUCLEOTIDE SEQUENCE [LARGE SCALE GENOMIC DNA]</scope>
    <source>
        <strain>AH187</strain>
    </source>
</reference>
<proteinExistence type="inferred from homology"/>
<name>MCSB_BACC7</name>
<comment type="function">
    <text evidence="1">Catalyzes the specific phosphorylation of arginine residues in a large number of proteins. Is part of the bacterial stress response system. Protein arginine phosphorylation has a physiologically important role and is involved in the regulation of many critical cellular processes, such as protein homeostasis, motility, competence, and stringent and stress responses, by regulating gene expression and protein activity.</text>
</comment>
<comment type="catalytic activity">
    <reaction evidence="1">
        <text>L-arginyl-[protein] + ATP = N(omega)-phospho-L-arginyl-[protein] + ADP + H(+)</text>
        <dbReference type="Rhea" id="RHEA:43384"/>
        <dbReference type="Rhea" id="RHEA-COMP:10532"/>
        <dbReference type="Rhea" id="RHEA-COMP:10533"/>
        <dbReference type="ChEBI" id="CHEBI:15378"/>
        <dbReference type="ChEBI" id="CHEBI:29965"/>
        <dbReference type="ChEBI" id="CHEBI:30616"/>
        <dbReference type="ChEBI" id="CHEBI:83226"/>
        <dbReference type="ChEBI" id="CHEBI:456216"/>
        <dbReference type="EC" id="2.7.14.1"/>
    </reaction>
</comment>
<comment type="activity regulation">
    <text evidence="1">Appears to be allosterically activated by the binding of pArg-containing polypeptides to the pArg-binding pocket localized in the C-terminal domain of McsB.</text>
</comment>
<comment type="similarity">
    <text evidence="1">Belongs to the ATP:guanido phosphotransferase family.</text>
</comment>
<accession>B7HQR4</accession>
<sequence>MSLDKIMNEAISPWMKGDGPDSDIVLSSRIRLARNFKKYQFSTMQNEEEAKQIQELFKKEFINKTVEPFGEFELLKMNELTPLQRRVLVEKHLISPNLAGTEYGACLLSENEHISVMLNEEDHIRIQCLFSGLQLSEALQSANQIDNWIEKEVEYAFDESLGYITSCPTNVGTGLRASVMIHLPGLVLTKRISRIIQVIQKLGLVVRGIYGEGSEALGNIFQVSNQMTLGKSEEDIIADLKSVIQQIIQQEKMARELIVQNSSIELEDKVYRSYGILANSRLIQSAEAANCLSDLRLGIDLGYIKGISRNILTELMVLTQPGILQQYAGGPLGPEERDYRRATLIRERLRIEKN</sequence>
<organism>
    <name type="scientific">Bacillus cereus (strain AH187)</name>
    <dbReference type="NCBI Taxonomy" id="405534"/>
    <lineage>
        <taxon>Bacteria</taxon>
        <taxon>Bacillati</taxon>
        <taxon>Bacillota</taxon>
        <taxon>Bacilli</taxon>
        <taxon>Bacillales</taxon>
        <taxon>Bacillaceae</taxon>
        <taxon>Bacillus</taxon>
        <taxon>Bacillus cereus group</taxon>
    </lineage>
</organism>
<gene>
    <name evidence="1" type="primary">mcsB</name>
    <name type="ordered locus">BCAH187_A0110</name>
</gene>
<keyword id="KW-0021">Allosteric enzyme</keyword>
<keyword id="KW-0067">ATP-binding</keyword>
<keyword id="KW-0418">Kinase</keyword>
<keyword id="KW-0547">Nucleotide-binding</keyword>
<keyword id="KW-0808">Transferase</keyword>
<dbReference type="EC" id="2.7.14.1" evidence="1"/>
<dbReference type="EMBL" id="CP001177">
    <property type="protein sequence ID" value="ACJ81406.1"/>
    <property type="molecule type" value="Genomic_DNA"/>
</dbReference>
<dbReference type="SMR" id="B7HQR4"/>
<dbReference type="KEGG" id="bcr:BCAH187_A0110"/>
<dbReference type="HOGENOM" id="CLU_066591_1_0_9"/>
<dbReference type="Proteomes" id="UP000002214">
    <property type="component" value="Chromosome"/>
</dbReference>
<dbReference type="GO" id="GO:0005615">
    <property type="term" value="C:extracellular space"/>
    <property type="evidence" value="ECO:0007669"/>
    <property type="project" value="TreeGrafter"/>
</dbReference>
<dbReference type="GO" id="GO:0005524">
    <property type="term" value="F:ATP binding"/>
    <property type="evidence" value="ECO:0007669"/>
    <property type="project" value="UniProtKB-KW"/>
</dbReference>
<dbReference type="GO" id="GO:0004111">
    <property type="term" value="F:creatine kinase activity"/>
    <property type="evidence" value="ECO:0007669"/>
    <property type="project" value="InterPro"/>
</dbReference>
<dbReference type="GO" id="GO:0004672">
    <property type="term" value="F:protein kinase activity"/>
    <property type="evidence" value="ECO:0007669"/>
    <property type="project" value="UniProtKB-UniRule"/>
</dbReference>
<dbReference type="GO" id="GO:0046314">
    <property type="term" value="P:phosphocreatine biosynthetic process"/>
    <property type="evidence" value="ECO:0007669"/>
    <property type="project" value="InterPro"/>
</dbReference>
<dbReference type="CDD" id="cd07930">
    <property type="entry name" value="bacterial_phosphagen_kinase"/>
    <property type="match status" value="1"/>
</dbReference>
<dbReference type="FunFam" id="3.30.590.10:FF:000007">
    <property type="entry name" value="Protein-arginine kinase"/>
    <property type="match status" value="1"/>
</dbReference>
<dbReference type="Gene3D" id="3.30.590.10">
    <property type="entry name" value="Glutamine synthetase/guanido kinase, catalytic domain"/>
    <property type="match status" value="1"/>
</dbReference>
<dbReference type="HAMAP" id="MF_00602">
    <property type="entry name" value="Prot_Arg_kinase"/>
    <property type="match status" value="1"/>
</dbReference>
<dbReference type="InterPro" id="IPR023660">
    <property type="entry name" value="Arg_Kinase"/>
</dbReference>
<dbReference type="InterPro" id="IPR000749">
    <property type="entry name" value="ATP-guanido_PTrfase"/>
</dbReference>
<dbReference type="InterPro" id="IPR022415">
    <property type="entry name" value="ATP-guanido_PTrfase_AS"/>
</dbReference>
<dbReference type="InterPro" id="IPR022414">
    <property type="entry name" value="ATP-guanido_PTrfase_cat"/>
</dbReference>
<dbReference type="InterPro" id="IPR014746">
    <property type="entry name" value="Gln_synth/guanido_kin_cat_dom"/>
</dbReference>
<dbReference type="NCBIfam" id="NF002194">
    <property type="entry name" value="PRK01059.1-4"/>
    <property type="match status" value="1"/>
</dbReference>
<dbReference type="NCBIfam" id="NF002195">
    <property type="entry name" value="PRK01059.1-5"/>
    <property type="match status" value="1"/>
</dbReference>
<dbReference type="PANTHER" id="PTHR11547:SF38">
    <property type="entry name" value="ARGININE KINASE 1-RELATED"/>
    <property type="match status" value="1"/>
</dbReference>
<dbReference type="PANTHER" id="PTHR11547">
    <property type="entry name" value="ARGININE OR CREATINE KINASE"/>
    <property type="match status" value="1"/>
</dbReference>
<dbReference type="Pfam" id="PF00217">
    <property type="entry name" value="ATP-gua_Ptrans"/>
    <property type="match status" value="1"/>
</dbReference>
<dbReference type="SUPFAM" id="SSF55931">
    <property type="entry name" value="Glutamine synthetase/guanido kinase"/>
    <property type="match status" value="1"/>
</dbReference>
<dbReference type="PROSITE" id="PS00112">
    <property type="entry name" value="PHOSPHAGEN_KINASE"/>
    <property type="match status" value="1"/>
</dbReference>
<dbReference type="PROSITE" id="PS51510">
    <property type="entry name" value="PHOSPHAGEN_KINASE_C"/>
    <property type="match status" value="1"/>
</dbReference>